<dbReference type="EMBL" id="AB072379">
    <property type="protein sequence ID" value="BAB88318.1"/>
    <property type="molecule type" value="Genomic_DNA"/>
</dbReference>
<dbReference type="PIR" id="JC7853">
    <property type="entry name" value="JC7853"/>
</dbReference>
<dbReference type="SMR" id="Q8TGE0"/>
<dbReference type="VEuPathDB" id="FungiDB:AO090001000189"/>
<dbReference type="eggNOG" id="ENOG502SNJJ">
    <property type="taxonomic scope" value="Eukaryota"/>
</dbReference>
<dbReference type="GO" id="GO:0030246">
    <property type="term" value="F:carbohydrate binding"/>
    <property type="evidence" value="ECO:0007669"/>
    <property type="project" value="UniProtKB-KW"/>
</dbReference>
<dbReference type="FunFam" id="2.120.10.70:FF:000001">
    <property type="entry name" value="Fucose-specific lectin"/>
    <property type="match status" value="1"/>
</dbReference>
<dbReference type="Gene3D" id="2.120.10.70">
    <property type="entry name" value="Fucose-specific lectin"/>
    <property type="match status" value="1"/>
</dbReference>
<dbReference type="InterPro" id="IPR012475">
    <property type="entry name" value="Fungal_lectin"/>
</dbReference>
<dbReference type="Pfam" id="PF07938">
    <property type="entry name" value="Fungal_lectin"/>
    <property type="match status" value="1"/>
</dbReference>
<dbReference type="SUPFAM" id="SSF89372">
    <property type="entry name" value="Fucose-specific lectin"/>
    <property type="match status" value="1"/>
</dbReference>
<feature type="chain" id="PRO_0000442744" description="Fucose-specific lectin">
    <location>
        <begin position="1"/>
        <end position="310"/>
    </location>
</feature>
<feature type="repeat" description="1" evidence="4">
    <location>
        <begin position="1"/>
        <end position="53"/>
    </location>
</feature>
<feature type="repeat" description="2" evidence="4">
    <location>
        <begin position="54"/>
        <end position="103"/>
    </location>
</feature>
<feature type="repeat" description="3" evidence="4">
    <location>
        <begin position="104"/>
        <end position="151"/>
    </location>
</feature>
<feature type="repeat" description="4" evidence="4">
    <location>
        <begin position="152"/>
        <end position="209"/>
    </location>
</feature>
<feature type="repeat" description="5" evidence="4">
    <location>
        <begin position="210"/>
        <end position="256"/>
    </location>
</feature>
<feature type="repeat" description="6" evidence="4">
    <location>
        <begin position="257"/>
        <end position="310"/>
    </location>
</feature>
<feature type="region of interest" description="6 X approximate tandem repeats" evidence="4">
    <location>
        <begin position="1"/>
        <end position="310"/>
    </location>
</feature>
<feature type="binding site" evidence="1">
    <location>
        <position position="25"/>
    </location>
    <ligand>
        <name>beta-L-fucose</name>
        <dbReference type="ChEBI" id="CHEBI:42589"/>
        <label>1</label>
    </ligand>
</feature>
<feature type="binding site" evidence="1">
    <location>
        <position position="37"/>
    </location>
    <ligand>
        <name>beta-L-fucose</name>
        <dbReference type="ChEBI" id="CHEBI:42589"/>
        <label>1</label>
    </ligand>
</feature>
<feature type="binding site" evidence="1">
    <location>
        <position position="44"/>
    </location>
    <ligand>
        <name>beta-L-fucose</name>
        <dbReference type="ChEBI" id="CHEBI:42589"/>
        <label>6</label>
    </ligand>
</feature>
<feature type="binding site" evidence="1">
    <location>
        <position position="73"/>
    </location>
    <ligand>
        <name>beta-L-fucose</name>
        <dbReference type="ChEBI" id="CHEBI:42589"/>
        <label>2</label>
    </ligand>
</feature>
<feature type="binding site" evidence="1">
    <location>
        <position position="85"/>
    </location>
    <ligand>
        <name>beta-L-fucose</name>
        <dbReference type="ChEBI" id="CHEBI:42589"/>
        <label>2</label>
    </ligand>
</feature>
<feature type="binding site" evidence="1">
    <location>
        <position position="94"/>
    </location>
    <ligand>
        <name>beta-L-fucose</name>
        <dbReference type="ChEBI" id="CHEBI:42589"/>
        <label>1</label>
    </ligand>
</feature>
<feature type="binding site" evidence="1">
    <location>
        <position position="126"/>
    </location>
    <ligand>
        <name>beta-L-fucose</name>
        <dbReference type="ChEBI" id="CHEBI:42589"/>
        <label>3</label>
    </ligand>
</feature>
<feature type="binding site" evidence="1">
    <location>
        <position position="138"/>
    </location>
    <ligand>
        <name>beta-L-fucose</name>
        <dbReference type="ChEBI" id="CHEBI:42589"/>
        <label>3</label>
    </ligand>
</feature>
<feature type="binding site" evidence="1">
    <location>
        <position position="146"/>
    </location>
    <ligand>
        <name>beta-L-fucose</name>
        <dbReference type="ChEBI" id="CHEBI:42589"/>
        <label>2</label>
    </ligand>
</feature>
<feature type="binding site" evidence="1">
    <location>
        <position position="177"/>
    </location>
    <ligand>
        <name>beta-L-fucose</name>
        <dbReference type="ChEBI" id="CHEBI:42589"/>
        <label>4</label>
    </ligand>
</feature>
<feature type="binding site" evidence="1">
    <location>
        <position position="189"/>
    </location>
    <ligand>
        <name>beta-L-fucose</name>
        <dbReference type="ChEBI" id="CHEBI:42589"/>
        <label>4</label>
    </ligand>
</feature>
<feature type="binding site" evidence="1">
    <location>
        <position position="198"/>
    </location>
    <ligand>
        <name>beta-L-fucose</name>
        <dbReference type="ChEBI" id="CHEBI:42589"/>
        <label>3</label>
    </ligand>
</feature>
<feature type="binding site" evidence="1">
    <location>
        <position position="230"/>
    </location>
    <ligand>
        <name>beta-L-fucose</name>
        <dbReference type="ChEBI" id="CHEBI:42589"/>
        <label>5</label>
    </ligand>
</feature>
<feature type="binding site" evidence="1">
    <location>
        <position position="242"/>
    </location>
    <ligand>
        <name>beta-L-fucose</name>
        <dbReference type="ChEBI" id="CHEBI:42589"/>
        <label>5</label>
    </ligand>
</feature>
<feature type="binding site" evidence="1">
    <location>
        <position position="277"/>
    </location>
    <ligand>
        <name>beta-L-fucose</name>
        <dbReference type="ChEBI" id="CHEBI:42589"/>
        <label>6</label>
    </ligand>
</feature>
<feature type="binding site" evidence="1">
    <location>
        <position position="291"/>
    </location>
    <ligand>
        <name>beta-L-fucose</name>
        <dbReference type="ChEBI" id="CHEBI:42589"/>
        <label>6</label>
    </ligand>
</feature>
<organism>
    <name type="scientific">Aspergillus oryzae</name>
    <name type="common">Yellow koji mold</name>
    <dbReference type="NCBI Taxonomy" id="5062"/>
    <lineage>
        <taxon>Eukaryota</taxon>
        <taxon>Fungi</taxon>
        <taxon>Dikarya</taxon>
        <taxon>Ascomycota</taxon>
        <taxon>Pezizomycotina</taxon>
        <taxon>Eurotiomycetes</taxon>
        <taxon>Eurotiomycetidae</taxon>
        <taxon>Eurotiales</taxon>
        <taxon>Aspergillaceae</taxon>
        <taxon>Aspergillus</taxon>
        <taxon>Aspergillus subgen. Circumdati</taxon>
    </lineage>
</organism>
<sequence>MSTPGAQEVLFRTGIAAVNSTNHLRVYFQDSHGSIRESLYESGWANGTAKNVIAKAKLGTPLAATSKELKNIRVYSLTEDNVLQEAAYDSGSGWYNGALAGAKFTVAPYSRIGSVFLAGTNALQLRIYAQKTDNTIQEYMWNGDGWKEGTNLGVALPGTGIGVTCWRYTDYDGPSIRVWFQTDNLKLVQRAYDPHTGWFKELTTIFDKAPPRCAIAATNFNPGKSSIYMRIYFVNSDNTIWQVCWDHGQGYHDKRTITPVIQGSEIAIISWEGPELRLYFQNGTYVSAISEWSWARHGSQLGRRALPPAE</sequence>
<protein>
    <recommendedName>
        <fullName evidence="3">Fucose-specific lectin</fullName>
    </recommendedName>
    <alternativeName>
        <fullName evidence="3">Aspergillus oryzea lectin</fullName>
        <shortName evidence="3">AOL</shortName>
    </alternativeName>
</protein>
<proteinExistence type="evidence at protein level"/>
<keyword id="KW-0903">Direct protein sequencing</keyword>
<keyword id="KW-0430">Lectin</keyword>
<keyword id="KW-0677">Repeat</keyword>
<comment type="function">
    <text evidence="1 2">Lectin that specifically binds to L-fucose and weakly reacts with mannose and N-acetyl-neuraminic acid (PubMed:12092808). Has strongest preference for the alpha-1,6-fucosylated chain (core fucose) on glycoproteins among alpha-1,2-, alpha-1,3-, alpha-1,4-, and alpha-1,6-fucosylated chains (By similarity). Binds to fucose residues of IgE in mice and human, causing antigen-independent IgE-mediated mast cell activation and anaphylactoid reactions in mice and is possibly implicated in allergic response to Aspergillus oryzae in humans (By similarity). Induces secretion of pro-inflammatory cytokines IL6 and IL8 implicated in ocular diseases such as mycotic keratitis, probably through its interaction with host toll-like receptors TLR2 and TLR4, followed by up-regulation of pro-inflammatory cytokines (By similarity).</text>
</comment>
<comment type="induction">
    <text evidence="2">Expressed in iron-deficient culture, but repressed in presence of iron (PubMed:12092808). Contains two GGATA sequences at -470 and -193 bp, consensus DNA-binding sites of GATA family transcription factor sreA which regulates siderophore biosynthetic genes and other genes involved in iron homeostasis (PubMed:12092808).</text>
</comment>
<comment type="domain">
    <text evidence="1">Has six binding sites that are non-equivalent, and owing to minor differences in amino-acid composition they exhibit a marked difference in specific ligand recognition (By similarity).</text>
</comment>
<comment type="biotechnology">
    <text evidence="4">Lectins have particular value as specific probes for investigating the distribution, structure and biological function of carbohydrate chains on the cell surface of animal, plant, and microorganism because of their specificity for defined carbohydrate structures. AFL is suitable for detecting core fucose on cell surface glycoproteins.</text>
</comment>
<comment type="similarity">
    <text evidence="4">Belongs to the fungal fucose-specific lectin family.</text>
</comment>
<reference key="1">
    <citation type="journal article" date="2002" name="Biosci. Biotechnol. Biochem.">
        <title>Molecular cloning and overexpression of fleA gene encoding a fucose-specific lectin of Aspergillus oryzae.</title>
        <authorList>
            <person name="Ishida H."/>
            <person name="Moritani T."/>
            <person name="Hata Y."/>
            <person name="Kawato A."/>
            <person name="Suginami K."/>
            <person name="Abe Y."/>
            <person name="Imayasu S."/>
        </authorList>
    </citation>
    <scope>NUCLEOTIDE SEQUENCE [LARGE SCALE GENOMIC DNA]</scope>
    <scope>PROTEIN SEQUENCE OF 132-146 AND 149-163</scope>
    <scope>INDUCTION</scope>
    <scope>FUNCTION</scope>
</reference>
<accession>Q8TGE0</accession>
<name>LECF_ASPOZ</name>
<gene>
    <name evidence="3" type="primary">fleA</name>
</gene>
<evidence type="ECO:0000250" key="1">
    <source>
        <dbReference type="UniProtKB" id="Q2UNX8"/>
    </source>
</evidence>
<evidence type="ECO:0000269" key="2">
    <source>
    </source>
</evidence>
<evidence type="ECO:0000303" key="3">
    <source>
    </source>
</evidence>
<evidence type="ECO:0000305" key="4"/>